<evidence type="ECO:0000255" key="1">
    <source>
        <dbReference type="HAMAP-Rule" id="MF_00615"/>
    </source>
</evidence>
<dbReference type="EC" id="2.7.7.6" evidence="1"/>
<dbReference type="EMBL" id="AE009439">
    <property type="protein sequence ID" value="AAM01593.1"/>
    <property type="molecule type" value="Genomic_DNA"/>
</dbReference>
<dbReference type="RefSeq" id="WP_011018748.1">
    <property type="nucleotide sequence ID" value="NC_003551.1"/>
</dbReference>
<dbReference type="SMR" id="Q8TYC4"/>
<dbReference type="STRING" id="190192.MK0378"/>
<dbReference type="PaxDb" id="190192-MK0378"/>
<dbReference type="EnsemblBacteria" id="AAM01593">
    <property type="protein sequence ID" value="AAM01593"/>
    <property type="gene ID" value="MK0378"/>
</dbReference>
<dbReference type="GeneID" id="1477681"/>
<dbReference type="KEGG" id="mka:MK0378"/>
<dbReference type="HOGENOM" id="CLU_3094104_0_0_2"/>
<dbReference type="InParanoid" id="Q8TYC4"/>
<dbReference type="OrthoDB" id="129238at2157"/>
<dbReference type="Proteomes" id="UP000001826">
    <property type="component" value="Chromosome"/>
</dbReference>
<dbReference type="GO" id="GO:0005737">
    <property type="term" value="C:cytoplasm"/>
    <property type="evidence" value="ECO:0007669"/>
    <property type="project" value="UniProtKB-SubCell"/>
</dbReference>
<dbReference type="GO" id="GO:0000428">
    <property type="term" value="C:DNA-directed RNA polymerase complex"/>
    <property type="evidence" value="ECO:0007669"/>
    <property type="project" value="UniProtKB-KW"/>
</dbReference>
<dbReference type="GO" id="GO:0003677">
    <property type="term" value="F:DNA binding"/>
    <property type="evidence" value="ECO:0007669"/>
    <property type="project" value="InterPro"/>
</dbReference>
<dbReference type="GO" id="GO:0003899">
    <property type="term" value="F:DNA-directed RNA polymerase activity"/>
    <property type="evidence" value="ECO:0007669"/>
    <property type="project" value="UniProtKB-UniRule"/>
</dbReference>
<dbReference type="GO" id="GO:0008270">
    <property type="term" value="F:zinc ion binding"/>
    <property type="evidence" value="ECO:0007669"/>
    <property type="project" value="UniProtKB-UniRule"/>
</dbReference>
<dbReference type="GO" id="GO:0006351">
    <property type="term" value="P:DNA-templated transcription"/>
    <property type="evidence" value="ECO:0007669"/>
    <property type="project" value="UniProtKB-UniRule"/>
</dbReference>
<dbReference type="Gene3D" id="2.20.28.30">
    <property type="entry name" value="RNA polymerase ii, chain L"/>
    <property type="match status" value="1"/>
</dbReference>
<dbReference type="HAMAP" id="MF_00615">
    <property type="entry name" value="RNApol_arch_Rpo12"/>
    <property type="match status" value="1"/>
</dbReference>
<dbReference type="InterPro" id="IPR006591">
    <property type="entry name" value="RNAP_P/RPABC4"/>
</dbReference>
<dbReference type="InterPro" id="IPR029040">
    <property type="entry name" value="RPABC4/Spt4"/>
</dbReference>
<dbReference type="InterPro" id="IPR023464">
    <property type="entry name" value="Rpo12"/>
</dbReference>
<dbReference type="Pfam" id="PF03604">
    <property type="entry name" value="Zn_ribbon_RPAB4"/>
    <property type="match status" value="1"/>
</dbReference>
<dbReference type="SMART" id="SM00659">
    <property type="entry name" value="RPOLCX"/>
    <property type="match status" value="1"/>
</dbReference>
<dbReference type="SUPFAM" id="SSF63393">
    <property type="entry name" value="RNA polymerase subunits"/>
    <property type="match status" value="1"/>
</dbReference>
<comment type="function">
    <text evidence="1">DNA-dependent RNA polymerase (RNAP) catalyzes the transcription of DNA into RNA using the four ribonucleoside triphosphates as substrates.</text>
</comment>
<comment type="catalytic activity">
    <reaction evidence="1">
        <text>RNA(n) + a ribonucleoside 5'-triphosphate = RNA(n+1) + diphosphate</text>
        <dbReference type="Rhea" id="RHEA:21248"/>
        <dbReference type="Rhea" id="RHEA-COMP:14527"/>
        <dbReference type="Rhea" id="RHEA-COMP:17342"/>
        <dbReference type="ChEBI" id="CHEBI:33019"/>
        <dbReference type="ChEBI" id="CHEBI:61557"/>
        <dbReference type="ChEBI" id="CHEBI:140395"/>
        <dbReference type="EC" id="2.7.7.6"/>
    </reaction>
</comment>
<comment type="cofactor">
    <cofactor evidence="1">
        <name>Zn(2+)</name>
        <dbReference type="ChEBI" id="CHEBI:29105"/>
    </cofactor>
    <text evidence="1">Binds 1 zinc ion.</text>
</comment>
<comment type="subunit">
    <text evidence="1">Part of the RNA polymerase complex.</text>
</comment>
<comment type="subcellular location">
    <subcellularLocation>
        <location evidence="1">Cytoplasm</location>
    </subcellularLocation>
</comment>
<comment type="similarity">
    <text evidence="1">Belongs to the archaeal Rpo12/eukaryotic RPC10 RNA polymerase subunit family.</text>
</comment>
<name>RPO12_METKA</name>
<accession>Q8TYC4</accession>
<organism>
    <name type="scientific">Methanopyrus kandleri (strain AV19 / DSM 6324 / JCM 9639 / NBRC 100938)</name>
    <dbReference type="NCBI Taxonomy" id="190192"/>
    <lineage>
        <taxon>Archaea</taxon>
        <taxon>Methanobacteriati</taxon>
        <taxon>Methanobacteriota</taxon>
        <taxon>Methanomada group</taxon>
        <taxon>Methanopyri</taxon>
        <taxon>Methanopyrales</taxon>
        <taxon>Methanopyraceae</taxon>
        <taxon>Methanopyrus</taxon>
    </lineage>
</organism>
<feature type="chain" id="PRO_0000159759" description="DNA-directed RNA polymerase subunit Rpo12">
    <location>
        <begin position="1"/>
        <end position="51"/>
    </location>
</feature>
<feature type="binding site" evidence="1">
    <location>
        <position position="14"/>
    </location>
    <ligand>
        <name>Zn(2+)</name>
        <dbReference type="ChEBI" id="CHEBI:29105"/>
    </ligand>
</feature>
<feature type="binding site" evidence="1">
    <location>
        <position position="29"/>
    </location>
    <ligand>
        <name>Zn(2+)</name>
        <dbReference type="ChEBI" id="CHEBI:29105"/>
    </ligand>
</feature>
<feature type="binding site" evidence="1">
    <location>
        <position position="32"/>
    </location>
    <ligand>
        <name>Zn(2+)</name>
        <dbReference type="ChEBI" id="CHEBI:29105"/>
    </ligand>
</feature>
<keyword id="KW-0963">Cytoplasm</keyword>
<keyword id="KW-0240">DNA-directed RNA polymerase</keyword>
<keyword id="KW-0479">Metal-binding</keyword>
<keyword id="KW-0548">Nucleotidyltransferase</keyword>
<keyword id="KW-1185">Reference proteome</keyword>
<keyword id="KW-0804">Transcription</keyword>
<keyword id="KW-0808">Transferase</keyword>
<keyword id="KW-0862">Zinc</keyword>
<gene>
    <name evidence="1" type="primary">rpo12</name>
    <name evidence="1" type="synonym">rpoP</name>
    <name type="ordered locus">MK0378</name>
</gene>
<reference key="1">
    <citation type="journal article" date="2002" name="Proc. Natl. Acad. Sci. U.S.A.">
        <title>The complete genome of hyperthermophile Methanopyrus kandleri AV19 and monophyly of archaeal methanogens.</title>
        <authorList>
            <person name="Slesarev A.I."/>
            <person name="Mezhevaya K.V."/>
            <person name="Makarova K.S."/>
            <person name="Polushin N.N."/>
            <person name="Shcherbinina O.V."/>
            <person name="Shakhova V.V."/>
            <person name="Belova G.I."/>
            <person name="Aravind L."/>
            <person name="Natale D.A."/>
            <person name="Rogozin I.B."/>
            <person name="Tatusov R.L."/>
            <person name="Wolf Y.I."/>
            <person name="Stetter K.O."/>
            <person name="Malykh A.G."/>
            <person name="Koonin E.V."/>
            <person name="Kozyavkin S.A."/>
        </authorList>
    </citation>
    <scope>NUCLEOTIDE SEQUENCE [LARGE SCALE GENOMIC DNA]</scope>
    <source>
        <strain>AV19 / DSM 6324 / JCM 9639 / NBRC 100938</strain>
    </source>
</reference>
<protein>
    <recommendedName>
        <fullName evidence="1">DNA-directed RNA polymerase subunit Rpo12</fullName>
        <ecNumber evidence="1">2.7.7.6</ecNumber>
    </recommendedName>
    <alternativeName>
        <fullName evidence="1">DNA-directed RNA polymerase subunit P</fullName>
    </alternativeName>
</protein>
<sequence>MYEEEKYEYICMRCGKKVRLDINEDPIRCTHCGFRLVMKPRHPVPRRYKAR</sequence>
<proteinExistence type="inferred from homology"/>